<comment type="function">
    <text evidence="1">May play a role in actin cytoskeleton reorganization in different tissues since its activation induces formation of actin stress fibers. It works as a guanine nucleotide exchange factor for Rho family of small GTPases. Links specifically G alpha q/11-coupled receptors to RHOA activation. May be an important regulator of processes involved in axon and dendrite formation. In neurons seems to be an exchange factor primarily for RAC1. Involved in skeletal myogenesis (By similarity).</text>
</comment>
<comment type="subunit">
    <text evidence="1">Interacts with activated GNAQ and GNA11. Interacts with RHOA, CDC42 and RAC1. Interacts (via the DH domain) with POPDC1 (via the C-terminus cytoplasmic tail) (By similarity).</text>
</comment>
<comment type="subcellular location">
    <subcellularLocation>
        <location evidence="1">Cytoplasm</location>
        <location evidence="1">Myofibril</location>
        <location evidence="1">Sarcomere</location>
    </subcellularLocation>
    <subcellularLocation>
        <location evidence="1">Cell membrane</location>
    </subcellularLocation>
    <text evidence="1">Highly colocalizes with actin regions.</text>
</comment>
<comment type="domain">
    <text evidence="1">The guanine nucleotide exchange activity is autoinhibited by the PH domain.</text>
</comment>
<reference key="1">
    <citation type="journal article" date="2004" name="Genome Res.">
        <title>The status, quality, and expansion of the NIH full-length cDNA project: the Mammalian Gene Collection (MGC).</title>
        <authorList>
            <consortium name="The MGC Project Team"/>
        </authorList>
    </citation>
    <scope>NUCLEOTIDE SEQUENCE [LARGE SCALE MRNA]</scope>
    <source>
        <tissue>Prostate</tissue>
    </source>
</reference>
<feature type="chain" id="PRO_0000322134" description="Rho guanine nucleotide exchange factor 25">
    <location>
        <begin position="1"/>
        <end position="579"/>
    </location>
</feature>
<feature type="domain" description="DH" evidence="2">
    <location>
        <begin position="199"/>
        <end position="375"/>
    </location>
</feature>
<feature type="domain" description="PH">
    <location>
        <begin position="380"/>
        <end position="499"/>
    </location>
</feature>
<feature type="region of interest" description="Disordered" evidence="3">
    <location>
        <begin position="27"/>
        <end position="61"/>
    </location>
</feature>
<feature type="region of interest" description="Disordered" evidence="3">
    <location>
        <begin position="172"/>
        <end position="194"/>
    </location>
</feature>
<feature type="region of interest" description="Important for binding to Rho GTPases" evidence="1">
    <location>
        <begin position="317"/>
        <end position="338"/>
    </location>
</feature>
<feature type="region of interest" description="Sufficient to bind activated GNAQ" evidence="1">
    <location>
        <begin position="472"/>
        <end position="498"/>
    </location>
</feature>
<feature type="region of interest" description="Disordered" evidence="3">
    <location>
        <begin position="487"/>
        <end position="516"/>
    </location>
</feature>
<feature type="region of interest" description="Disordered" evidence="3">
    <location>
        <begin position="546"/>
        <end position="579"/>
    </location>
</feature>
<protein>
    <recommendedName>
        <fullName>Rho guanine nucleotide exchange factor 25</fullName>
    </recommendedName>
    <alternativeName>
        <fullName>Guanine nucleotide exchange factor GEFT</fullName>
    </alternativeName>
    <alternativeName>
        <fullName>Rac/Cdc42/Rho exchange factor GEFT</fullName>
    </alternativeName>
    <alternativeName>
        <fullName>RhoA/Rac/Cdc42 guanine nucleotide exchange factor GEFT</fullName>
    </alternativeName>
</protein>
<sequence length="579" mass="64160">MKPPDRPTPGRTDRILGVMGGMLRACAVPGQEGPQERDPLGPGSTKTESECTEEDQTGEREREVLAWAPQPESYSIAGSEGSMSASAVSGLAALSGPSSGLSSHPCSPVPPGPVTGLRRWLDHSKHCLSVETEADSGQTRQCENWMLEPTLTTGQELPELTLLTTLLEGPGVKAQPAEEETLSQAPKNEEEQKKTALERSMFVLSELVETERMYVDDLGQIVEGYMATMATQGVPESLRGRDRIVFGNIQQIYEWHRDYFLQELQQCLKDPDWLAQLFIKHERRLHMYVVYCQNKPKSEHVLSEFGDSYFEELRQQLGHRLQLSDLLIKPVQRIMKYQLLLKDFLKYYRRAGMDTEELEQAVEVMCFVPKRCNDMMSLGRLRGFEGKLTAQGKLLGQDTFLVTEPEAGGLLSSRGRERRVFLFEQIVIFSEALGGGGRGGTQPGYVYKNSIKASDPAVSQAWIKQVAQILESQRDFLNALQSPIEYQRRESQTNSLGRSGGPGVGSPGRMAQVSMHTPINGSLPSLLLLPRGEVPRAPLPLDTQALSETPLTPYDPPALPTVNSPPGQARLAKLDEDEL</sequence>
<keyword id="KW-1003">Cell membrane</keyword>
<keyword id="KW-0963">Cytoplasm</keyword>
<keyword id="KW-0344">Guanine-nucleotide releasing factor</keyword>
<keyword id="KW-0472">Membrane</keyword>
<keyword id="KW-1185">Reference proteome</keyword>
<accession>Q6P720</accession>
<gene>
    <name type="primary">Arhgef25</name>
    <name type="synonym">Geft</name>
</gene>
<organism>
    <name type="scientific">Rattus norvegicus</name>
    <name type="common">Rat</name>
    <dbReference type="NCBI Taxonomy" id="10116"/>
    <lineage>
        <taxon>Eukaryota</taxon>
        <taxon>Metazoa</taxon>
        <taxon>Chordata</taxon>
        <taxon>Craniata</taxon>
        <taxon>Vertebrata</taxon>
        <taxon>Euteleostomi</taxon>
        <taxon>Mammalia</taxon>
        <taxon>Eutheria</taxon>
        <taxon>Euarchontoglires</taxon>
        <taxon>Glires</taxon>
        <taxon>Rodentia</taxon>
        <taxon>Myomorpha</taxon>
        <taxon>Muroidea</taxon>
        <taxon>Muridae</taxon>
        <taxon>Murinae</taxon>
        <taxon>Rattus</taxon>
    </lineage>
</organism>
<dbReference type="EMBL" id="BC061879">
    <property type="protein sequence ID" value="AAH61879.1"/>
    <property type="molecule type" value="mRNA"/>
</dbReference>
<dbReference type="RefSeq" id="NP_955427.1">
    <property type="nucleotide sequence ID" value="NM_199395.1"/>
</dbReference>
<dbReference type="SMR" id="Q6P720"/>
<dbReference type="BioGRID" id="260857">
    <property type="interactions" value="1"/>
</dbReference>
<dbReference type="FunCoup" id="Q6P720">
    <property type="interactions" value="155"/>
</dbReference>
<dbReference type="STRING" id="10116.ENSRNOP00000006800"/>
<dbReference type="GlyGen" id="Q6P720">
    <property type="glycosylation" value="1 site"/>
</dbReference>
<dbReference type="iPTMnet" id="Q6P720"/>
<dbReference type="PhosphoSitePlus" id="Q6P720"/>
<dbReference type="jPOST" id="Q6P720"/>
<dbReference type="PaxDb" id="10116-ENSRNOP00000006800"/>
<dbReference type="UCSC" id="RGD:735210">
    <property type="organism name" value="rat"/>
</dbReference>
<dbReference type="AGR" id="RGD:735210"/>
<dbReference type="RGD" id="735210">
    <property type="gene designation" value="Arhgef25"/>
</dbReference>
<dbReference type="VEuPathDB" id="HostDB:ENSRNOG00000005034"/>
<dbReference type="eggNOG" id="KOG0689">
    <property type="taxonomic scope" value="Eukaryota"/>
</dbReference>
<dbReference type="HOGENOM" id="CLU_001356_6_0_1"/>
<dbReference type="InParanoid" id="Q6P720"/>
<dbReference type="Reactome" id="R-RNO-193648">
    <property type="pathway name" value="NRAGE signals death through JNK"/>
</dbReference>
<dbReference type="Reactome" id="R-RNO-416476">
    <property type="pathway name" value="G alpha (q) signalling events"/>
</dbReference>
<dbReference type="Reactome" id="R-RNO-416482">
    <property type="pathway name" value="G alpha (12/13) signalling events"/>
</dbReference>
<dbReference type="Reactome" id="R-RNO-8980692">
    <property type="pathway name" value="RHOA GTPase cycle"/>
</dbReference>
<dbReference type="Reactome" id="R-RNO-9013026">
    <property type="pathway name" value="RHOB GTPase cycle"/>
</dbReference>
<dbReference type="Reactome" id="R-RNO-9013148">
    <property type="pathway name" value="CDC42 GTPase cycle"/>
</dbReference>
<dbReference type="Reactome" id="R-RNO-9013149">
    <property type="pathway name" value="RAC1 GTPase cycle"/>
</dbReference>
<dbReference type="PRO" id="PR:Q6P720"/>
<dbReference type="Proteomes" id="UP000002494">
    <property type="component" value="Chromosome 7"/>
</dbReference>
<dbReference type="Bgee" id="ENSRNOG00000005034">
    <property type="expression patterns" value="Expressed in frontal cortex and 20 other cell types or tissues"/>
</dbReference>
<dbReference type="GO" id="GO:0005737">
    <property type="term" value="C:cytoplasm"/>
    <property type="evidence" value="ECO:0000318"/>
    <property type="project" value="GO_Central"/>
</dbReference>
<dbReference type="GO" id="GO:0019898">
    <property type="term" value="C:extrinsic component of membrane"/>
    <property type="evidence" value="ECO:0000318"/>
    <property type="project" value="GO_Central"/>
</dbReference>
<dbReference type="GO" id="GO:0030016">
    <property type="term" value="C:myofibril"/>
    <property type="evidence" value="ECO:0000250"/>
    <property type="project" value="UniProtKB"/>
</dbReference>
<dbReference type="GO" id="GO:0005886">
    <property type="term" value="C:plasma membrane"/>
    <property type="evidence" value="ECO:0000250"/>
    <property type="project" value="UniProtKB"/>
</dbReference>
<dbReference type="GO" id="GO:0030017">
    <property type="term" value="C:sarcomere"/>
    <property type="evidence" value="ECO:0007669"/>
    <property type="project" value="UniProtKB-SubCell"/>
</dbReference>
<dbReference type="GO" id="GO:0005085">
    <property type="term" value="F:guanyl-nucleotide exchange factor activity"/>
    <property type="evidence" value="ECO:0000318"/>
    <property type="project" value="GO_Central"/>
</dbReference>
<dbReference type="GO" id="GO:0007411">
    <property type="term" value="P:axon guidance"/>
    <property type="evidence" value="ECO:0000318"/>
    <property type="project" value="GO_Central"/>
</dbReference>
<dbReference type="CDD" id="cd00160">
    <property type="entry name" value="RhoGEF"/>
    <property type="match status" value="1"/>
</dbReference>
<dbReference type="FunFam" id="1.20.900.10:FF:000008">
    <property type="entry name" value="rho guanine nucleotide exchange factor 25"/>
    <property type="match status" value="1"/>
</dbReference>
<dbReference type="Gene3D" id="1.20.900.10">
    <property type="entry name" value="Dbl homology (DH) domain"/>
    <property type="match status" value="1"/>
</dbReference>
<dbReference type="Gene3D" id="2.30.29.30">
    <property type="entry name" value="Pleckstrin-homology domain (PH domain)/Phosphotyrosine-binding domain (PTB)"/>
    <property type="match status" value="2"/>
</dbReference>
<dbReference type="InterPro" id="IPR035899">
    <property type="entry name" value="DBL_dom_sf"/>
</dbReference>
<dbReference type="InterPro" id="IPR000219">
    <property type="entry name" value="DH_dom"/>
</dbReference>
<dbReference type="InterPro" id="IPR011993">
    <property type="entry name" value="PH-like_dom_sf"/>
</dbReference>
<dbReference type="InterPro" id="IPR051336">
    <property type="entry name" value="RhoGEF_Guanine_NuclExch_SF"/>
</dbReference>
<dbReference type="InterPro" id="IPR055251">
    <property type="entry name" value="SOS1_NGEF_PH"/>
</dbReference>
<dbReference type="PANTHER" id="PTHR22826:SF117">
    <property type="entry name" value="PLECKSTRIN HOMOLOGY DOMAIN-CONTAINING FAMILY G MEMBER 4B-RELATED"/>
    <property type="match status" value="1"/>
</dbReference>
<dbReference type="PANTHER" id="PTHR22826">
    <property type="entry name" value="RHO GUANINE EXCHANGE FACTOR-RELATED"/>
    <property type="match status" value="1"/>
</dbReference>
<dbReference type="Pfam" id="PF00621">
    <property type="entry name" value="RhoGEF"/>
    <property type="match status" value="1"/>
</dbReference>
<dbReference type="Pfam" id="PF22697">
    <property type="entry name" value="SOS1_NGEF_PH"/>
    <property type="match status" value="1"/>
</dbReference>
<dbReference type="SMART" id="SM00325">
    <property type="entry name" value="RhoGEF"/>
    <property type="match status" value="1"/>
</dbReference>
<dbReference type="SUPFAM" id="SSF48065">
    <property type="entry name" value="DBL homology domain (DH-domain)"/>
    <property type="match status" value="1"/>
</dbReference>
<dbReference type="SUPFAM" id="SSF50729">
    <property type="entry name" value="PH domain-like"/>
    <property type="match status" value="1"/>
</dbReference>
<dbReference type="PROSITE" id="PS50010">
    <property type="entry name" value="DH_2"/>
    <property type="match status" value="1"/>
</dbReference>
<name>ARHGP_RAT</name>
<evidence type="ECO:0000250" key="1"/>
<evidence type="ECO:0000255" key="2">
    <source>
        <dbReference type="PROSITE-ProRule" id="PRU00062"/>
    </source>
</evidence>
<evidence type="ECO:0000256" key="3">
    <source>
        <dbReference type="SAM" id="MobiDB-lite"/>
    </source>
</evidence>
<proteinExistence type="evidence at transcript level"/>